<keyword id="KW-0167">Capsid protein</keyword>
<keyword id="KW-0175">Coiled coil</keyword>
<keyword id="KW-1035">Host cytoplasm</keyword>
<keyword id="KW-0426">Late protein</keyword>
<keyword id="KW-0946">Virion</keyword>
<name>CAPSD_BPPH8</name>
<dbReference type="EMBL" id="X06751">
    <property type="protein sequence ID" value="CAA29926.1"/>
    <property type="molecule type" value="Genomic_DNA"/>
</dbReference>
<dbReference type="PIR" id="S03314">
    <property type="entry name" value="VHBP80"/>
</dbReference>
<dbReference type="SMR" id="P05481"/>
<dbReference type="GO" id="GO:0030430">
    <property type="term" value="C:host cell cytoplasm"/>
    <property type="evidence" value="ECO:0007669"/>
    <property type="project" value="UniProtKB-SubCell"/>
</dbReference>
<dbReference type="GO" id="GO:0019028">
    <property type="term" value="C:viral capsid"/>
    <property type="evidence" value="ECO:0007669"/>
    <property type="project" value="UniProtKB-UniRule"/>
</dbReference>
<dbReference type="Gene3D" id="3.30.1930.10">
    <property type="entry name" value="capsid protein of prophage domain"/>
    <property type="match status" value="1"/>
</dbReference>
<dbReference type="Gene3D" id="3.15.30.10">
    <property type="entry name" value="putative capsid protein of prophage domain like"/>
    <property type="match status" value="1"/>
</dbReference>
<dbReference type="HAMAP" id="MF_04133">
    <property type="entry name" value="CAPSID_LAMBDA"/>
    <property type="match status" value="1"/>
</dbReference>
<dbReference type="InterPro" id="IPR005564">
    <property type="entry name" value="Major_capsid_GpE"/>
</dbReference>
<dbReference type="Pfam" id="PF03864">
    <property type="entry name" value="Phage_cap_E"/>
    <property type="match status" value="1"/>
</dbReference>
<feature type="chain" id="PRO_0000077564" description="Major capsid protein">
    <location>
        <begin position="1"/>
        <end position="341"/>
    </location>
</feature>
<feature type="coiled-coil region" evidence="2">
    <location>
        <begin position="109"/>
        <end position="129"/>
    </location>
</feature>
<reference key="1">
    <citation type="journal article" date="1988" name="Nucleic Acids Res.">
        <title>Nucleotide sequence from bacteriophage phi 80 with high homology to the major coat protein gene of lambda.</title>
        <authorList>
            <person name="Kitao S."/>
            <person name="Nakano E."/>
        </authorList>
    </citation>
    <scope>NUCLEOTIDE SEQUENCE [GENOMIC DNA]</scope>
</reference>
<protein>
    <recommendedName>
        <fullName evidence="2">Major capsid protein</fullName>
    </recommendedName>
    <alternativeName>
        <fullName evidence="3">Gene product 5</fullName>
    </alternativeName>
    <alternativeName>
        <fullName evidence="3">Gene product E</fullName>
    </alternativeName>
    <alternativeName>
        <fullName evidence="2">Major head protein</fullName>
    </alternativeName>
</protein>
<accession>P05481</accession>
<proteinExistence type="inferred from homology"/>
<organism>
    <name type="scientific">Enterobacteria phage phi80</name>
    <name type="common">Bacteriophage phi-80</name>
    <dbReference type="NCBI Taxonomy" id="10713"/>
    <lineage>
        <taxon>Viruses</taxon>
        <taxon>Duplodnaviria</taxon>
        <taxon>Heunggongvirae</taxon>
        <taxon>Uroviricota</taxon>
        <taxon>Caudoviricetes</taxon>
    </lineage>
</organism>
<evidence type="ECO:0000250" key="1">
    <source>
        <dbReference type="UniProtKB" id="P03713"/>
    </source>
</evidence>
<evidence type="ECO:0000255" key="2">
    <source>
        <dbReference type="HAMAP-Rule" id="MF_04133"/>
    </source>
</evidence>
<evidence type="ECO:0000305" key="3"/>
<organismHost>
    <name type="scientific">Escherichia coli</name>
    <dbReference type="NCBI Taxonomy" id="562"/>
</organismHost>
<gene>
    <name type="primary">E</name>
    <name type="synonym">5</name>
</gene>
<sequence>MSVYTTAQLLAVNEKKFKFDPLFLRIFFRETYPFSTEKVYLSQIPGLVNMALYVSPIVSGKVIRSRGGSTSEFTPGYVKPKHEVNPLMMTLRLPDEDPQNVADPVYRRRRIILQNMKDEELAIAQVEEKQAVSAVLSGKYTMTGEAFEPVEVDMGRSAGNNIVQAGAAAWSTRDKETYDPTDDIEAYALNARGVVNIIVFDPKGWALFRSFKAVEKKLDTRRGSNSELETAVKDLGMAVSYKGMFGDVAIVVYSGQYVENDVKKNYLPDLTMVLGNTQARGLRTYGCILDADAQREGIDASTRYPKNWVQLGDPVREFTMIQSAPLMLLPDPDAFVSVKLA</sequence>
<comment type="function">
    <text evidence="1">Assembles to form an icosahedral capsid with a T=7 symmetry. The icosahedral capsid is about 60 nm in diameter and composed of 415 major capsid proteins. The assembly is primed by the interaction between capsid assembly protease and portal dodecamer, and major capsid proteins assemble cooperatively to form the procapsid with the help of capsid scaffolding protein. Major capsid protein forms hexons and pentons of the icosahedron. Viral genomic DNA is packaged into the procapsid through the portal vertex. The packaging triggers a dramatic reconfiguration of the capsid shell.</text>
</comment>
<comment type="subunit">
    <text evidence="2">Homomultimer.</text>
</comment>
<comment type="subcellular location">
    <subcellularLocation>
        <location evidence="2">Virion</location>
    </subcellularLocation>
    <subcellularLocation>
        <location evidence="2">Host cytoplasm</location>
    </subcellularLocation>
    <text evidence="2">Forms the capsid icosahedric shell.</text>
</comment>
<comment type="similarity">
    <text evidence="2">Belongs to the lambda phage major capsid protein family.</text>
</comment>